<dbReference type="EMBL" id="AE016879">
    <property type="protein sequence ID" value="AAP28201.1"/>
    <property type="molecule type" value="Genomic_DNA"/>
</dbReference>
<dbReference type="EMBL" id="AE017334">
    <property type="protein sequence ID" value="AAT33609.1"/>
    <property type="molecule type" value="Genomic_DNA"/>
</dbReference>
<dbReference type="EMBL" id="AE017225">
    <property type="protein sequence ID" value="AAT56468.1"/>
    <property type="molecule type" value="Genomic_DNA"/>
</dbReference>
<dbReference type="RefSeq" id="NP_846715.1">
    <property type="nucleotide sequence ID" value="NC_003997.3"/>
</dbReference>
<dbReference type="RefSeq" id="YP_030417.1">
    <property type="nucleotide sequence ID" value="NC_005945.1"/>
</dbReference>
<dbReference type="SMR" id="Q81LW9"/>
<dbReference type="STRING" id="261594.GBAA_4490"/>
<dbReference type="DNASU" id="1088001"/>
<dbReference type="KEGG" id="ban:BA_4490"/>
<dbReference type="KEGG" id="bar:GBAA_4490"/>
<dbReference type="KEGG" id="bat:BAS4168"/>
<dbReference type="PATRIC" id="fig|198094.11.peg.4458"/>
<dbReference type="eggNOG" id="COG0267">
    <property type="taxonomic scope" value="Bacteria"/>
</dbReference>
<dbReference type="HOGENOM" id="CLU_190949_0_2_9"/>
<dbReference type="OrthoDB" id="197660at2"/>
<dbReference type="Proteomes" id="UP000000427">
    <property type="component" value="Chromosome"/>
</dbReference>
<dbReference type="Proteomes" id="UP000000594">
    <property type="component" value="Chromosome"/>
</dbReference>
<dbReference type="GO" id="GO:0005737">
    <property type="term" value="C:cytoplasm"/>
    <property type="evidence" value="ECO:0007669"/>
    <property type="project" value="UniProtKB-ARBA"/>
</dbReference>
<dbReference type="GO" id="GO:1990904">
    <property type="term" value="C:ribonucleoprotein complex"/>
    <property type="evidence" value="ECO:0007669"/>
    <property type="project" value="UniProtKB-KW"/>
</dbReference>
<dbReference type="GO" id="GO:0005840">
    <property type="term" value="C:ribosome"/>
    <property type="evidence" value="ECO:0007669"/>
    <property type="project" value="UniProtKB-KW"/>
</dbReference>
<dbReference type="GO" id="GO:0003735">
    <property type="term" value="F:structural constituent of ribosome"/>
    <property type="evidence" value="ECO:0007669"/>
    <property type="project" value="InterPro"/>
</dbReference>
<dbReference type="GO" id="GO:0006412">
    <property type="term" value="P:translation"/>
    <property type="evidence" value="ECO:0007669"/>
    <property type="project" value="UniProtKB-UniRule"/>
</dbReference>
<dbReference type="Gene3D" id="2.20.28.120">
    <property type="entry name" value="Ribosomal protein L33"/>
    <property type="match status" value="1"/>
</dbReference>
<dbReference type="HAMAP" id="MF_00294">
    <property type="entry name" value="Ribosomal_bL33"/>
    <property type="match status" value="1"/>
</dbReference>
<dbReference type="InterPro" id="IPR001705">
    <property type="entry name" value="Ribosomal_bL33"/>
</dbReference>
<dbReference type="InterPro" id="IPR018264">
    <property type="entry name" value="Ribosomal_bL33_CS"/>
</dbReference>
<dbReference type="InterPro" id="IPR038584">
    <property type="entry name" value="Ribosomal_bL33_sf"/>
</dbReference>
<dbReference type="InterPro" id="IPR011332">
    <property type="entry name" value="Ribosomal_zn-bd"/>
</dbReference>
<dbReference type="NCBIfam" id="NF001764">
    <property type="entry name" value="PRK00504.1"/>
    <property type="match status" value="1"/>
</dbReference>
<dbReference type="NCBIfam" id="NF001860">
    <property type="entry name" value="PRK00595.1"/>
    <property type="match status" value="1"/>
</dbReference>
<dbReference type="NCBIfam" id="TIGR01023">
    <property type="entry name" value="rpmG_bact"/>
    <property type="match status" value="1"/>
</dbReference>
<dbReference type="PANTHER" id="PTHR43168">
    <property type="entry name" value="50S RIBOSOMAL PROTEIN L33, CHLOROPLASTIC"/>
    <property type="match status" value="1"/>
</dbReference>
<dbReference type="PANTHER" id="PTHR43168:SF2">
    <property type="entry name" value="LARGE RIBOSOMAL SUBUNIT PROTEIN BL33C"/>
    <property type="match status" value="1"/>
</dbReference>
<dbReference type="Pfam" id="PF00471">
    <property type="entry name" value="Ribosomal_L33"/>
    <property type="match status" value="1"/>
</dbReference>
<dbReference type="SUPFAM" id="SSF57829">
    <property type="entry name" value="Zn-binding ribosomal proteins"/>
    <property type="match status" value="1"/>
</dbReference>
<dbReference type="PROSITE" id="PS00582">
    <property type="entry name" value="RIBOSOMAL_L33"/>
    <property type="match status" value="1"/>
</dbReference>
<keyword id="KW-1185">Reference proteome</keyword>
<keyword id="KW-0687">Ribonucleoprotein</keyword>
<keyword id="KW-0689">Ribosomal protein</keyword>
<gene>
    <name evidence="1" type="primary">rpmG2</name>
    <name type="ordered locus">BA_4490</name>
    <name type="ordered locus">GBAA_4490</name>
    <name type="ordered locus">BAS4168</name>
</gene>
<accession>Q81LW9</accession>
<accession>Q6HTC1</accession>
<accession>Q6KML3</accession>
<organism>
    <name type="scientific">Bacillus anthracis</name>
    <dbReference type="NCBI Taxonomy" id="1392"/>
    <lineage>
        <taxon>Bacteria</taxon>
        <taxon>Bacillati</taxon>
        <taxon>Bacillota</taxon>
        <taxon>Bacilli</taxon>
        <taxon>Bacillales</taxon>
        <taxon>Bacillaceae</taxon>
        <taxon>Bacillus</taxon>
        <taxon>Bacillus cereus group</taxon>
    </lineage>
</organism>
<sequence>MRVNITLACTECGDRNYISKKNKRNNAERIELKKYCKRDKKSTLHRETK</sequence>
<feature type="chain" id="PRO_0000356382" description="Large ribosomal subunit protein bL33B">
    <location>
        <begin position="1"/>
        <end position="49"/>
    </location>
</feature>
<name>RL332_BACAN</name>
<evidence type="ECO:0000255" key="1">
    <source>
        <dbReference type="HAMAP-Rule" id="MF_00294"/>
    </source>
</evidence>
<comment type="similarity">
    <text evidence="1">Belongs to the bacterial ribosomal protein bL33 family.</text>
</comment>
<protein>
    <recommendedName>
        <fullName evidence="1">Large ribosomal subunit protein bL33B</fullName>
    </recommendedName>
    <alternativeName>
        <fullName evidence="1">50S ribosomal protein L33 2</fullName>
    </alternativeName>
</protein>
<reference key="1">
    <citation type="journal article" date="2003" name="Nature">
        <title>The genome sequence of Bacillus anthracis Ames and comparison to closely related bacteria.</title>
        <authorList>
            <person name="Read T.D."/>
            <person name="Peterson S.N."/>
            <person name="Tourasse N.J."/>
            <person name="Baillie L.W."/>
            <person name="Paulsen I.T."/>
            <person name="Nelson K.E."/>
            <person name="Tettelin H."/>
            <person name="Fouts D.E."/>
            <person name="Eisen J.A."/>
            <person name="Gill S.R."/>
            <person name="Holtzapple E.K."/>
            <person name="Okstad O.A."/>
            <person name="Helgason E."/>
            <person name="Rilstone J."/>
            <person name="Wu M."/>
            <person name="Kolonay J.F."/>
            <person name="Beanan M.J."/>
            <person name="Dodson R.J."/>
            <person name="Brinkac L.M."/>
            <person name="Gwinn M.L."/>
            <person name="DeBoy R.T."/>
            <person name="Madpu R."/>
            <person name="Daugherty S.C."/>
            <person name="Durkin A.S."/>
            <person name="Haft D.H."/>
            <person name="Nelson W.C."/>
            <person name="Peterson J.D."/>
            <person name="Pop M."/>
            <person name="Khouri H.M."/>
            <person name="Radune D."/>
            <person name="Benton J.L."/>
            <person name="Mahamoud Y."/>
            <person name="Jiang L."/>
            <person name="Hance I.R."/>
            <person name="Weidman J.F."/>
            <person name="Berry K.J."/>
            <person name="Plaut R.D."/>
            <person name="Wolf A.M."/>
            <person name="Watkins K.L."/>
            <person name="Nierman W.C."/>
            <person name="Hazen A."/>
            <person name="Cline R.T."/>
            <person name="Redmond C."/>
            <person name="Thwaite J.E."/>
            <person name="White O."/>
            <person name="Salzberg S.L."/>
            <person name="Thomason B."/>
            <person name="Friedlander A.M."/>
            <person name="Koehler T.M."/>
            <person name="Hanna P.C."/>
            <person name="Kolstoe A.-B."/>
            <person name="Fraser C.M."/>
        </authorList>
    </citation>
    <scope>NUCLEOTIDE SEQUENCE [LARGE SCALE GENOMIC DNA]</scope>
    <source>
        <strain>Ames / isolate Porton</strain>
    </source>
</reference>
<reference key="2">
    <citation type="submission" date="2004-01" db="EMBL/GenBank/DDBJ databases">
        <title>Complete genome sequence of Bacillus anthracis Sterne.</title>
        <authorList>
            <person name="Brettin T.S."/>
            <person name="Bruce D."/>
            <person name="Challacombe J.F."/>
            <person name="Gilna P."/>
            <person name="Han C."/>
            <person name="Hill K."/>
            <person name="Hitchcock P."/>
            <person name="Jackson P."/>
            <person name="Keim P."/>
            <person name="Longmire J."/>
            <person name="Lucas S."/>
            <person name="Okinaka R."/>
            <person name="Richardson P."/>
            <person name="Rubin E."/>
            <person name="Tice H."/>
        </authorList>
    </citation>
    <scope>NUCLEOTIDE SEQUENCE [LARGE SCALE GENOMIC DNA]</scope>
    <source>
        <strain>Sterne</strain>
    </source>
</reference>
<reference key="3">
    <citation type="journal article" date="2009" name="J. Bacteriol.">
        <title>The complete genome sequence of Bacillus anthracis Ames 'Ancestor'.</title>
        <authorList>
            <person name="Ravel J."/>
            <person name="Jiang L."/>
            <person name="Stanley S.T."/>
            <person name="Wilson M.R."/>
            <person name="Decker R.S."/>
            <person name="Read T.D."/>
            <person name="Worsham P."/>
            <person name="Keim P.S."/>
            <person name="Salzberg S.L."/>
            <person name="Fraser-Liggett C.M."/>
            <person name="Rasko D.A."/>
        </authorList>
    </citation>
    <scope>NUCLEOTIDE SEQUENCE [LARGE SCALE GENOMIC DNA]</scope>
    <source>
        <strain>Ames ancestor</strain>
    </source>
</reference>
<proteinExistence type="inferred from homology"/>